<evidence type="ECO:0000250" key="1"/>
<evidence type="ECO:0000255" key="2">
    <source>
        <dbReference type="HAMAP-Rule" id="MF_01356"/>
    </source>
</evidence>
<evidence type="ECO:0000305" key="3"/>
<dbReference type="EC" id="7.1.1.-" evidence="2"/>
<dbReference type="EMBL" id="AM920689">
    <property type="protein sequence ID" value="CAP50984.1"/>
    <property type="status" value="ALT_INIT"/>
    <property type="molecule type" value="Genomic_DNA"/>
</dbReference>
<dbReference type="SMR" id="B0RR99"/>
<dbReference type="KEGG" id="xca:xcc-b100_1634"/>
<dbReference type="HOGENOM" id="CLU_055737_7_3_6"/>
<dbReference type="Proteomes" id="UP000001188">
    <property type="component" value="Chromosome"/>
</dbReference>
<dbReference type="GO" id="GO:0005886">
    <property type="term" value="C:plasma membrane"/>
    <property type="evidence" value="ECO:0007669"/>
    <property type="project" value="UniProtKB-SubCell"/>
</dbReference>
<dbReference type="GO" id="GO:0045271">
    <property type="term" value="C:respiratory chain complex I"/>
    <property type="evidence" value="ECO:0007669"/>
    <property type="project" value="TreeGrafter"/>
</dbReference>
<dbReference type="GO" id="GO:0051539">
    <property type="term" value="F:4 iron, 4 sulfur cluster binding"/>
    <property type="evidence" value="ECO:0007669"/>
    <property type="project" value="UniProtKB-KW"/>
</dbReference>
<dbReference type="GO" id="GO:0005506">
    <property type="term" value="F:iron ion binding"/>
    <property type="evidence" value="ECO:0007669"/>
    <property type="project" value="UniProtKB-UniRule"/>
</dbReference>
<dbReference type="GO" id="GO:0008137">
    <property type="term" value="F:NADH dehydrogenase (ubiquinone) activity"/>
    <property type="evidence" value="ECO:0007669"/>
    <property type="project" value="InterPro"/>
</dbReference>
<dbReference type="GO" id="GO:0050136">
    <property type="term" value="F:NADH:ubiquinone reductase (non-electrogenic) activity"/>
    <property type="evidence" value="ECO:0007669"/>
    <property type="project" value="UniProtKB-UniRule"/>
</dbReference>
<dbReference type="GO" id="GO:0048038">
    <property type="term" value="F:quinone binding"/>
    <property type="evidence" value="ECO:0007669"/>
    <property type="project" value="UniProtKB-KW"/>
</dbReference>
<dbReference type="GO" id="GO:0009060">
    <property type="term" value="P:aerobic respiration"/>
    <property type="evidence" value="ECO:0007669"/>
    <property type="project" value="TreeGrafter"/>
</dbReference>
<dbReference type="GO" id="GO:0015990">
    <property type="term" value="P:electron transport coupled proton transport"/>
    <property type="evidence" value="ECO:0007669"/>
    <property type="project" value="TreeGrafter"/>
</dbReference>
<dbReference type="FunFam" id="3.40.50.12280:FF:000001">
    <property type="entry name" value="NADH-quinone oxidoreductase subunit B 2"/>
    <property type="match status" value="1"/>
</dbReference>
<dbReference type="Gene3D" id="3.40.50.12280">
    <property type="match status" value="1"/>
</dbReference>
<dbReference type="HAMAP" id="MF_01356">
    <property type="entry name" value="NDH1_NuoB"/>
    <property type="match status" value="1"/>
</dbReference>
<dbReference type="InterPro" id="IPR006137">
    <property type="entry name" value="NADH_UbQ_OxRdtase-like_20kDa"/>
</dbReference>
<dbReference type="InterPro" id="IPR006138">
    <property type="entry name" value="NADH_UQ_OxRdtase_20Kd_su"/>
</dbReference>
<dbReference type="NCBIfam" id="TIGR01957">
    <property type="entry name" value="nuoB_fam"/>
    <property type="match status" value="1"/>
</dbReference>
<dbReference type="NCBIfam" id="NF005012">
    <property type="entry name" value="PRK06411.1"/>
    <property type="match status" value="1"/>
</dbReference>
<dbReference type="PANTHER" id="PTHR11995">
    <property type="entry name" value="NADH DEHYDROGENASE"/>
    <property type="match status" value="1"/>
</dbReference>
<dbReference type="PANTHER" id="PTHR11995:SF14">
    <property type="entry name" value="NADH DEHYDROGENASE [UBIQUINONE] IRON-SULFUR PROTEIN 7, MITOCHONDRIAL"/>
    <property type="match status" value="1"/>
</dbReference>
<dbReference type="Pfam" id="PF01058">
    <property type="entry name" value="Oxidored_q6"/>
    <property type="match status" value="1"/>
</dbReference>
<dbReference type="SUPFAM" id="SSF56770">
    <property type="entry name" value="HydA/Nqo6-like"/>
    <property type="match status" value="1"/>
</dbReference>
<dbReference type="PROSITE" id="PS01150">
    <property type="entry name" value="COMPLEX1_20K"/>
    <property type="match status" value="1"/>
</dbReference>
<comment type="function">
    <text evidence="1">NDH-1 shuttles electrons from NADH, via FMN and iron-sulfur (Fe-S) centers, to quinones in the respiratory chain. Couples the redox reaction to proton translocation (for every two electrons transferred, four hydrogen ions are translocated across the cytoplasmic membrane), and thus conserves the redox energy in a proton gradient (By similarity).</text>
</comment>
<comment type="catalytic activity">
    <reaction evidence="2">
        <text>a quinone + NADH + 5 H(+)(in) = a quinol + NAD(+) + 4 H(+)(out)</text>
        <dbReference type="Rhea" id="RHEA:57888"/>
        <dbReference type="ChEBI" id="CHEBI:15378"/>
        <dbReference type="ChEBI" id="CHEBI:24646"/>
        <dbReference type="ChEBI" id="CHEBI:57540"/>
        <dbReference type="ChEBI" id="CHEBI:57945"/>
        <dbReference type="ChEBI" id="CHEBI:132124"/>
    </reaction>
</comment>
<comment type="cofactor">
    <cofactor evidence="2">
        <name>[4Fe-4S] cluster</name>
        <dbReference type="ChEBI" id="CHEBI:49883"/>
    </cofactor>
    <text evidence="2">Binds 1 [4Fe-4S] cluster.</text>
</comment>
<comment type="subunit">
    <text evidence="2">NDH-1 is composed of 14 different subunits. Subunits NuoB, C, D, E, F, and G constitute the peripheral sector of the complex.</text>
</comment>
<comment type="subcellular location">
    <subcellularLocation>
        <location evidence="2">Cell inner membrane</location>
        <topology evidence="2">Peripheral membrane protein</topology>
        <orientation evidence="2">Cytoplasmic side</orientation>
    </subcellularLocation>
</comment>
<comment type="similarity">
    <text evidence="2">Belongs to the complex I 20 kDa subunit family.</text>
</comment>
<comment type="sequence caution" evidence="3">
    <conflict type="erroneous initiation">
        <sequence resource="EMBL-CDS" id="CAP50984"/>
    </conflict>
</comment>
<name>NUOB_XANCB</name>
<feature type="chain" id="PRO_0000358511" description="NADH-quinone oxidoreductase subunit B">
    <location>
        <begin position="1"/>
        <end position="184"/>
    </location>
</feature>
<feature type="binding site" evidence="2">
    <location>
        <position position="63"/>
    </location>
    <ligand>
        <name>[4Fe-4S] cluster</name>
        <dbReference type="ChEBI" id="CHEBI:49883"/>
    </ligand>
</feature>
<feature type="binding site" evidence="2">
    <location>
        <position position="64"/>
    </location>
    <ligand>
        <name>[4Fe-4S] cluster</name>
        <dbReference type="ChEBI" id="CHEBI:49883"/>
    </ligand>
</feature>
<feature type="binding site" evidence="2">
    <location>
        <position position="128"/>
    </location>
    <ligand>
        <name>[4Fe-4S] cluster</name>
        <dbReference type="ChEBI" id="CHEBI:49883"/>
    </ligand>
</feature>
<feature type="binding site" evidence="2">
    <location>
        <position position="158"/>
    </location>
    <ligand>
        <name>[4Fe-4S] cluster</name>
        <dbReference type="ChEBI" id="CHEBI:49883"/>
    </ligand>
</feature>
<sequence length="184" mass="20428">MGVIQTLDRLMTNPMPEGRVEDILRPEGENPLLEKGYVTTSVDALLNWARTGSMWPMTFGLACCAVEMMHAGAARLDLDRYGVVFRPSPRQSDVMIVAGTLVNKMAPALRKVYDQMPDPKWVISMGSCANGGGYYHYSYSVVRGCDRIVPVDIYVPGCPPTAEALVYGILQLQKKIWRTQTIAR</sequence>
<protein>
    <recommendedName>
        <fullName evidence="2">NADH-quinone oxidoreductase subunit B</fullName>
        <ecNumber evidence="2">7.1.1.-</ecNumber>
    </recommendedName>
    <alternativeName>
        <fullName evidence="2">NADH dehydrogenase I subunit B</fullName>
    </alternativeName>
    <alternativeName>
        <fullName evidence="2">NDH-1 subunit B</fullName>
    </alternativeName>
</protein>
<gene>
    <name evidence="2" type="primary">nuoB</name>
    <name type="ordered locus">xcc-b100_1634</name>
</gene>
<keyword id="KW-0004">4Fe-4S</keyword>
<keyword id="KW-0997">Cell inner membrane</keyword>
<keyword id="KW-1003">Cell membrane</keyword>
<keyword id="KW-0408">Iron</keyword>
<keyword id="KW-0411">Iron-sulfur</keyword>
<keyword id="KW-0472">Membrane</keyword>
<keyword id="KW-0479">Metal-binding</keyword>
<keyword id="KW-0520">NAD</keyword>
<keyword id="KW-0874">Quinone</keyword>
<keyword id="KW-1278">Translocase</keyword>
<keyword id="KW-0813">Transport</keyword>
<keyword id="KW-0830">Ubiquinone</keyword>
<proteinExistence type="inferred from homology"/>
<accession>B0RR99</accession>
<organism>
    <name type="scientific">Xanthomonas campestris pv. campestris (strain B100)</name>
    <dbReference type="NCBI Taxonomy" id="509169"/>
    <lineage>
        <taxon>Bacteria</taxon>
        <taxon>Pseudomonadati</taxon>
        <taxon>Pseudomonadota</taxon>
        <taxon>Gammaproteobacteria</taxon>
        <taxon>Lysobacterales</taxon>
        <taxon>Lysobacteraceae</taxon>
        <taxon>Xanthomonas</taxon>
    </lineage>
</organism>
<reference key="1">
    <citation type="journal article" date="2008" name="J. Biotechnol.">
        <title>The genome of Xanthomonas campestris pv. campestris B100 and its use for the reconstruction of metabolic pathways involved in xanthan biosynthesis.</title>
        <authorList>
            <person name="Vorhoelter F.-J."/>
            <person name="Schneiker S."/>
            <person name="Goesmann A."/>
            <person name="Krause L."/>
            <person name="Bekel T."/>
            <person name="Kaiser O."/>
            <person name="Linke B."/>
            <person name="Patschkowski T."/>
            <person name="Rueckert C."/>
            <person name="Schmid J."/>
            <person name="Sidhu V.K."/>
            <person name="Sieber V."/>
            <person name="Tauch A."/>
            <person name="Watt S.A."/>
            <person name="Weisshaar B."/>
            <person name="Becker A."/>
            <person name="Niehaus K."/>
            <person name="Puehler A."/>
        </authorList>
    </citation>
    <scope>NUCLEOTIDE SEQUENCE [LARGE SCALE GENOMIC DNA]</scope>
    <source>
        <strain>B100</strain>
    </source>
</reference>